<gene>
    <name evidence="1" type="primary">kduI</name>
    <name type="ordered locus">YPN_1905</name>
    <name type="ORF">YP516_2121</name>
</gene>
<proteinExistence type="inferred from homology"/>
<accession>Q1CIE6</accession>
<accession>C4GTL3</accession>
<evidence type="ECO:0000255" key="1">
    <source>
        <dbReference type="HAMAP-Rule" id="MF_00687"/>
    </source>
</evidence>
<name>KDUI_YERPN</name>
<comment type="function">
    <text evidence="1">Catalyzes the isomerization of 5-dehydro-4-deoxy-D-glucuronate to 3-deoxy-D-glycero-2,5-hexodiulosonate.</text>
</comment>
<comment type="catalytic activity">
    <reaction evidence="1">
        <text>5-dehydro-4-deoxy-D-glucuronate = 3-deoxy-D-glycero-2,5-hexodiulosonate</text>
        <dbReference type="Rhea" id="RHEA:23896"/>
        <dbReference type="ChEBI" id="CHEBI:17117"/>
        <dbReference type="ChEBI" id="CHEBI:29071"/>
        <dbReference type="EC" id="5.3.1.17"/>
    </reaction>
</comment>
<comment type="cofactor">
    <cofactor evidence="1">
        <name>Zn(2+)</name>
        <dbReference type="ChEBI" id="CHEBI:29105"/>
    </cofactor>
    <text evidence="1">Binds 1 zinc ion per subunit.</text>
</comment>
<comment type="pathway">
    <text evidence="1">Glycan metabolism; pectin degradation; 2-dehydro-3-deoxy-D-gluconate from pectin: step 4/5.</text>
</comment>
<comment type="similarity">
    <text evidence="1">Belongs to the KduI family.</text>
</comment>
<sequence length="278" mass="31083">MQVRQSIHSDHAKQLDTAGLRREFLIEKIFAADDYTMTYSHIDRIIVGGILPVSKAVSIGNEVGKQLGVSYFLERRELGAINIGGPGLIVVDGQTYDIGNEEALYVGKGAKEVKFSSIDRANPAKFYYNSAPAHTTYPNKKITLAEASPQTLGDDATSNRRTINKYIVPDVLPTCQLSMGLTKLAPGSLWNTMPCHTHERRMEVYFYFDMDEETAVFHMMGQPQETRHLLVHNEQAVISPSWSIHSGVGTKRYTFIWGMVGENQVFGDMDHIAVSELR</sequence>
<reference key="1">
    <citation type="journal article" date="2006" name="J. Bacteriol.">
        <title>Complete genome sequence of Yersinia pestis strains Antiqua and Nepal516: evidence of gene reduction in an emerging pathogen.</title>
        <authorList>
            <person name="Chain P.S.G."/>
            <person name="Hu P."/>
            <person name="Malfatti S.A."/>
            <person name="Radnedge L."/>
            <person name="Larimer F."/>
            <person name="Vergez L.M."/>
            <person name="Worsham P."/>
            <person name="Chu M.C."/>
            <person name="Andersen G.L."/>
        </authorList>
    </citation>
    <scope>NUCLEOTIDE SEQUENCE [LARGE SCALE GENOMIC DNA]</scope>
    <source>
        <strain>Nepal516</strain>
    </source>
</reference>
<reference key="2">
    <citation type="submission" date="2009-04" db="EMBL/GenBank/DDBJ databases">
        <title>Yersinia pestis Nepal516A whole genome shotgun sequencing project.</title>
        <authorList>
            <person name="Plunkett G. III"/>
            <person name="Anderson B.D."/>
            <person name="Baumler D.J."/>
            <person name="Burland V."/>
            <person name="Cabot E.L."/>
            <person name="Glasner J.D."/>
            <person name="Mau B."/>
            <person name="Neeno-Eckwall E."/>
            <person name="Perna N.T."/>
            <person name="Munk A.C."/>
            <person name="Tapia R."/>
            <person name="Green L.D."/>
            <person name="Rogers Y.C."/>
            <person name="Detter J.C."/>
            <person name="Bruce D.C."/>
            <person name="Brettin T.S."/>
        </authorList>
    </citation>
    <scope>NUCLEOTIDE SEQUENCE [LARGE SCALE GENOMIC DNA]</scope>
    <source>
        <strain>Nepal516</strain>
    </source>
</reference>
<protein>
    <recommendedName>
        <fullName evidence="1">4-deoxy-L-threo-5-hexosulose-uronate ketol-isomerase</fullName>
        <ecNumber evidence="1">5.3.1.17</ecNumber>
    </recommendedName>
    <alternativeName>
        <fullName evidence="1">5-keto-4-deoxyuronate isomerase</fullName>
    </alternativeName>
    <alternativeName>
        <fullName evidence="1">DKI isomerase</fullName>
    </alternativeName>
</protein>
<keyword id="KW-0413">Isomerase</keyword>
<keyword id="KW-0479">Metal-binding</keyword>
<keyword id="KW-0862">Zinc</keyword>
<feature type="chain" id="PRO_1000045097" description="4-deoxy-L-threo-5-hexosulose-uronate ketol-isomerase">
    <location>
        <begin position="1"/>
        <end position="278"/>
    </location>
</feature>
<feature type="binding site" evidence="1">
    <location>
        <position position="196"/>
    </location>
    <ligand>
        <name>Zn(2+)</name>
        <dbReference type="ChEBI" id="CHEBI:29105"/>
    </ligand>
</feature>
<feature type="binding site" evidence="1">
    <location>
        <position position="198"/>
    </location>
    <ligand>
        <name>Zn(2+)</name>
        <dbReference type="ChEBI" id="CHEBI:29105"/>
    </ligand>
</feature>
<feature type="binding site" evidence="1">
    <location>
        <position position="203"/>
    </location>
    <ligand>
        <name>Zn(2+)</name>
        <dbReference type="ChEBI" id="CHEBI:29105"/>
    </ligand>
</feature>
<feature type="binding site" evidence="1">
    <location>
        <position position="245"/>
    </location>
    <ligand>
        <name>Zn(2+)</name>
        <dbReference type="ChEBI" id="CHEBI:29105"/>
    </ligand>
</feature>
<organism>
    <name type="scientific">Yersinia pestis bv. Antiqua (strain Nepal516)</name>
    <dbReference type="NCBI Taxonomy" id="377628"/>
    <lineage>
        <taxon>Bacteria</taxon>
        <taxon>Pseudomonadati</taxon>
        <taxon>Pseudomonadota</taxon>
        <taxon>Gammaproteobacteria</taxon>
        <taxon>Enterobacterales</taxon>
        <taxon>Yersiniaceae</taxon>
        <taxon>Yersinia</taxon>
    </lineage>
</organism>
<dbReference type="EC" id="5.3.1.17" evidence="1"/>
<dbReference type="EMBL" id="CP000305">
    <property type="protein sequence ID" value="ABG18234.1"/>
    <property type="molecule type" value="Genomic_DNA"/>
</dbReference>
<dbReference type="EMBL" id="ACNQ01000011">
    <property type="protein sequence ID" value="EEO76527.1"/>
    <property type="molecule type" value="Genomic_DNA"/>
</dbReference>
<dbReference type="RefSeq" id="WP_002210829.1">
    <property type="nucleotide sequence ID" value="NZ_ACNQ01000011.1"/>
</dbReference>
<dbReference type="SMR" id="Q1CIE6"/>
<dbReference type="GeneID" id="57976853"/>
<dbReference type="KEGG" id="ypn:YPN_1905"/>
<dbReference type="HOGENOM" id="CLU_062609_0_0_6"/>
<dbReference type="UniPathway" id="UPA00545">
    <property type="reaction ID" value="UER00826"/>
</dbReference>
<dbReference type="Proteomes" id="UP000008936">
    <property type="component" value="Chromosome"/>
</dbReference>
<dbReference type="GO" id="GO:0008697">
    <property type="term" value="F:4-deoxy-L-threo-5-hexosulose-uronate ketol-isomerase activity"/>
    <property type="evidence" value="ECO:0007669"/>
    <property type="project" value="UniProtKB-UniRule"/>
</dbReference>
<dbReference type="GO" id="GO:0008270">
    <property type="term" value="F:zinc ion binding"/>
    <property type="evidence" value="ECO:0007669"/>
    <property type="project" value="UniProtKB-UniRule"/>
</dbReference>
<dbReference type="GO" id="GO:0019698">
    <property type="term" value="P:D-galacturonate catabolic process"/>
    <property type="evidence" value="ECO:0007669"/>
    <property type="project" value="TreeGrafter"/>
</dbReference>
<dbReference type="GO" id="GO:0042840">
    <property type="term" value="P:D-glucuronate catabolic process"/>
    <property type="evidence" value="ECO:0007669"/>
    <property type="project" value="TreeGrafter"/>
</dbReference>
<dbReference type="GO" id="GO:0045490">
    <property type="term" value="P:pectin catabolic process"/>
    <property type="evidence" value="ECO:0007669"/>
    <property type="project" value="UniProtKB-UniRule"/>
</dbReference>
<dbReference type="CDD" id="cd20491">
    <property type="entry name" value="cupin_KduI_C"/>
    <property type="match status" value="1"/>
</dbReference>
<dbReference type="CDD" id="cd20294">
    <property type="entry name" value="cupin_KduI_N"/>
    <property type="match status" value="1"/>
</dbReference>
<dbReference type="FunFam" id="2.60.120.10:FF:000018">
    <property type="entry name" value="4-deoxy-L-threo-5-hexosulose-uronate ketol-isomerase"/>
    <property type="match status" value="1"/>
</dbReference>
<dbReference type="FunFam" id="2.60.120.520:FF:000001">
    <property type="entry name" value="4-deoxy-L-threo-5-hexosulose-uronate ketol-isomerase"/>
    <property type="match status" value="1"/>
</dbReference>
<dbReference type="Gene3D" id="2.60.120.10">
    <property type="entry name" value="Jelly Rolls"/>
    <property type="match status" value="1"/>
</dbReference>
<dbReference type="Gene3D" id="2.60.120.520">
    <property type="entry name" value="pectin degrading enzyme 5-keto 4- deoxyuronate isomerase, domain 1"/>
    <property type="match status" value="1"/>
</dbReference>
<dbReference type="HAMAP" id="MF_00687">
    <property type="entry name" value="KduI"/>
    <property type="match status" value="1"/>
</dbReference>
<dbReference type="InterPro" id="IPR007045">
    <property type="entry name" value="KduI"/>
</dbReference>
<dbReference type="InterPro" id="IPR021120">
    <property type="entry name" value="KduI/IolB_isomerase"/>
</dbReference>
<dbReference type="InterPro" id="IPR027449">
    <property type="entry name" value="KduI_N"/>
</dbReference>
<dbReference type="InterPro" id="IPR014710">
    <property type="entry name" value="RmlC-like_jellyroll"/>
</dbReference>
<dbReference type="InterPro" id="IPR011051">
    <property type="entry name" value="RmlC_Cupin_sf"/>
</dbReference>
<dbReference type="NCBIfam" id="NF002091">
    <property type="entry name" value="PRK00924.1"/>
    <property type="match status" value="1"/>
</dbReference>
<dbReference type="PANTHER" id="PTHR38461">
    <property type="entry name" value="4-DEOXY-L-THREO-5-HEXOSULOSE-URONATE KETOL-ISOMERASE"/>
    <property type="match status" value="1"/>
</dbReference>
<dbReference type="PANTHER" id="PTHR38461:SF1">
    <property type="entry name" value="4-DEOXY-L-THREO-5-HEXOSULOSE-URONATE KETOL-ISOMERASE"/>
    <property type="match status" value="1"/>
</dbReference>
<dbReference type="Pfam" id="PF04962">
    <property type="entry name" value="KduI"/>
    <property type="match status" value="1"/>
</dbReference>
<dbReference type="PIRSF" id="PIRSF006625">
    <property type="entry name" value="KduI"/>
    <property type="match status" value="1"/>
</dbReference>
<dbReference type="SUPFAM" id="SSF51182">
    <property type="entry name" value="RmlC-like cupins"/>
    <property type="match status" value="1"/>
</dbReference>